<feature type="chain" id="PRO_0000355601" description="Peroxidase 9">
    <location>
        <begin position="1" status="less than"/>
        <end position="15" status="greater than"/>
    </location>
</feature>
<feature type="unsure residue" description="Q or K">
    <location>
        <position position="2"/>
    </location>
</feature>
<feature type="unsure residue" description="F or M">
    <location>
        <position position="4"/>
    </location>
</feature>
<feature type="unsure residue" description="K or Q">
    <location>
        <position position="8"/>
    </location>
</feature>
<feature type="unsure residue" description="L or I">
    <location>
        <position position="10"/>
    </location>
</feature>
<feature type="non-terminal residue">
    <location>
        <position position="1"/>
    </location>
</feature>
<feature type="non-terminal residue">
    <location>
        <position position="15"/>
    </location>
</feature>
<accession>P86066</accession>
<organism>
    <name type="scientific">Daucus carota</name>
    <name type="common">Wild carrot</name>
    <dbReference type="NCBI Taxonomy" id="4039"/>
    <lineage>
        <taxon>Eukaryota</taxon>
        <taxon>Viridiplantae</taxon>
        <taxon>Streptophyta</taxon>
        <taxon>Embryophyta</taxon>
        <taxon>Tracheophyta</taxon>
        <taxon>Spermatophyta</taxon>
        <taxon>Magnoliopsida</taxon>
        <taxon>eudicotyledons</taxon>
        <taxon>Gunneridae</taxon>
        <taxon>Pentapetalae</taxon>
        <taxon>asterids</taxon>
        <taxon>campanulids</taxon>
        <taxon>Apiales</taxon>
        <taxon>Apiaceae</taxon>
        <taxon>Apioideae</taxon>
        <taxon>Scandiceae</taxon>
        <taxon>Daucinae</taxon>
        <taxon>Daucus</taxon>
        <taxon>Daucus sect. Daucus</taxon>
    </lineage>
</organism>
<protein>
    <recommendedName>
        <fullName evidence="1">Peroxidase 9</fullName>
        <ecNumber>1.11.1.7</ecNumber>
    </recommendedName>
</protein>
<keyword id="KW-0106">Calcium</keyword>
<keyword id="KW-0903">Direct protein sequencing</keyword>
<keyword id="KW-0349">Heme</keyword>
<keyword id="KW-0376">Hydrogen peroxide</keyword>
<keyword id="KW-0408">Iron</keyword>
<keyword id="KW-0479">Metal-binding</keyword>
<keyword id="KW-0560">Oxidoreductase</keyword>
<keyword id="KW-0575">Peroxidase</keyword>
<name>PER9_DAUCA</name>
<sequence length="15" mass="1747">GQNFTSDKDLYTDSR</sequence>
<dbReference type="EC" id="1.11.1.7"/>
<dbReference type="GO" id="GO:0140825">
    <property type="term" value="F:lactoperoxidase activity"/>
    <property type="evidence" value="ECO:0007669"/>
    <property type="project" value="UniProtKB-EC"/>
</dbReference>
<dbReference type="GO" id="GO:0046872">
    <property type="term" value="F:metal ion binding"/>
    <property type="evidence" value="ECO:0007669"/>
    <property type="project" value="UniProtKB-KW"/>
</dbReference>
<dbReference type="GO" id="GO:0042744">
    <property type="term" value="P:hydrogen peroxide catabolic process"/>
    <property type="evidence" value="ECO:0007669"/>
    <property type="project" value="UniProtKB-KW"/>
</dbReference>
<proteinExistence type="evidence at protein level"/>
<evidence type="ECO:0000250" key="1">
    <source>
        <dbReference type="UniProtKB" id="P84714"/>
    </source>
</evidence>
<evidence type="ECO:0000255" key="2">
    <source>
        <dbReference type="PROSITE-ProRule" id="PRU00297"/>
    </source>
</evidence>
<evidence type="ECO:0000305" key="3"/>
<comment type="function">
    <text evidence="2">Removal of H(2)O(2), oxidation of toxic reductants, biosynthesis and degradation of lignin, suberization, auxin catabolism, response to environmental stresses such as wounding, pathogen attack and oxidative stress. These functions might be dependent on each isozyme/isoform in each plant tissue.</text>
</comment>
<comment type="catalytic activity">
    <reaction>
        <text>2 a phenolic donor + H2O2 = 2 a phenolic radical donor + 2 H2O</text>
        <dbReference type="Rhea" id="RHEA:56136"/>
        <dbReference type="ChEBI" id="CHEBI:15377"/>
        <dbReference type="ChEBI" id="CHEBI:16240"/>
        <dbReference type="ChEBI" id="CHEBI:139520"/>
        <dbReference type="ChEBI" id="CHEBI:139521"/>
        <dbReference type="EC" id="1.11.1.7"/>
    </reaction>
</comment>
<comment type="cofactor">
    <cofactor evidence="1 2">
        <name>Ca(2+)</name>
        <dbReference type="ChEBI" id="CHEBI:29108"/>
    </cofactor>
    <text evidence="1 2">Binds 2 calcium ions per subunit.</text>
</comment>
<comment type="cofactor">
    <cofactor evidence="1 2">
        <name>heme b</name>
        <dbReference type="ChEBI" id="CHEBI:60344"/>
    </cofactor>
    <text evidence="1 2">Binds 1 heme b (iron(II)-protoporphyrin IX) group per subunit.</text>
</comment>
<comment type="similarity">
    <text evidence="2">Belongs to the peroxidase family. Classical plant (class III) peroxidase subfamily.</text>
</comment>
<reference evidence="3" key="1">
    <citation type="submission" date="2008-07" db="UniProtKB">
        <authorList>
            <person name="Sabater Jara A.B."/>
            <person name="Almagro L."/>
            <person name="Bru R."/>
            <person name="Pedreno M.A."/>
        </authorList>
    </citation>
    <scope>PROTEIN SEQUENCE</scope>
</reference>